<comment type="function">
    <text evidence="1">Participates actively in the response to hyperosmotic and heat shock by preventing the aggregation of stress-denatured proteins and by disaggregating proteins, also in an autonomous, DnaK-independent fashion. Unfolded proteins bind initially to DnaJ; upon interaction with the DnaJ-bound protein, DnaK hydrolyzes its bound ATP, resulting in the formation of a stable complex. GrpE releases ADP from DnaK; ATP binding to DnaK triggers the release of the substrate protein, thus completing the reaction cycle. Several rounds of ATP-dependent interactions between DnaJ, DnaK and GrpE are required for fully efficient folding. Also involved, together with DnaK and GrpE, in the DNA replication of plasmids through activation of initiation proteins.</text>
</comment>
<comment type="cofactor">
    <cofactor evidence="1">
        <name>Zn(2+)</name>
        <dbReference type="ChEBI" id="CHEBI:29105"/>
    </cofactor>
    <text evidence="1">Binds 2 Zn(2+) ions per monomer.</text>
</comment>
<comment type="subunit">
    <text evidence="1">Homodimer.</text>
</comment>
<comment type="subcellular location">
    <subcellularLocation>
        <location evidence="1">Cytoplasm</location>
    </subcellularLocation>
</comment>
<comment type="domain">
    <text evidence="1">The J domain is necessary and sufficient to stimulate DnaK ATPase activity. Zinc center 1 plays an important role in the autonomous, DnaK-independent chaperone activity of DnaJ. Zinc center 2 is essential for interaction with DnaK and for DnaJ activity.</text>
</comment>
<comment type="similarity">
    <text evidence="1">Belongs to the DnaJ family.</text>
</comment>
<dbReference type="EMBL" id="CP001339">
    <property type="protein sequence ID" value="ACL72061.1"/>
    <property type="molecule type" value="Genomic_DNA"/>
</dbReference>
<dbReference type="RefSeq" id="WP_012637545.1">
    <property type="nucleotide sequence ID" value="NC_011901.1"/>
</dbReference>
<dbReference type="SMR" id="B8GNX2"/>
<dbReference type="STRING" id="396588.Tgr7_0973"/>
<dbReference type="KEGG" id="tgr:Tgr7_0973"/>
<dbReference type="eggNOG" id="COG0484">
    <property type="taxonomic scope" value="Bacteria"/>
</dbReference>
<dbReference type="HOGENOM" id="CLU_017633_0_7_6"/>
<dbReference type="OrthoDB" id="9779889at2"/>
<dbReference type="Proteomes" id="UP000002383">
    <property type="component" value="Chromosome"/>
</dbReference>
<dbReference type="GO" id="GO:0005737">
    <property type="term" value="C:cytoplasm"/>
    <property type="evidence" value="ECO:0007669"/>
    <property type="project" value="UniProtKB-SubCell"/>
</dbReference>
<dbReference type="GO" id="GO:0005524">
    <property type="term" value="F:ATP binding"/>
    <property type="evidence" value="ECO:0007669"/>
    <property type="project" value="InterPro"/>
</dbReference>
<dbReference type="GO" id="GO:0031072">
    <property type="term" value="F:heat shock protein binding"/>
    <property type="evidence" value="ECO:0007669"/>
    <property type="project" value="InterPro"/>
</dbReference>
<dbReference type="GO" id="GO:0051082">
    <property type="term" value="F:unfolded protein binding"/>
    <property type="evidence" value="ECO:0007669"/>
    <property type="project" value="UniProtKB-UniRule"/>
</dbReference>
<dbReference type="GO" id="GO:0008270">
    <property type="term" value="F:zinc ion binding"/>
    <property type="evidence" value="ECO:0007669"/>
    <property type="project" value="UniProtKB-UniRule"/>
</dbReference>
<dbReference type="GO" id="GO:0051085">
    <property type="term" value="P:chaperone cofactor-dependent protein refolding"/>
    <property type="evidence" value="ECO:0007669"/>
    <property type="project" value="TreeGrafter"/>
</dbReference>
<dbReference type="GO" id="GO:0006260">
    <property type="term" value="P:DNA replication"/>
    <property type="evidence" value="ECO:0007669"/>
    <property type="project" value="UniProtKB-KW"/>
</dbReference>
<dbReference type="GO" id="GO:0042026">
    <property type="term" value="P:protein refolding"/>
    <property type="evidence" value="ECO:0007669"/>
    <property type="project" value="TreeGrafter"/>
</dbReference>
<dbReference type="GO" id="GO:0009408">
    <property type="term" value="P:response to heat"/>
    <property type="evidence" value="ECO:0007669"/>
    <property type="project" value="InterPro"/>
</dbReference>
<dbReference type="CDD" id="cd06257">
    <property type="entry name" value="DnaJ"/>
    <property type="match status" value="1"/>
</dbReference>
<dbReference type="CDD" id="cd10747">
    <property type="entry name" value="DnaJ_C"/>
    <property type="match status" value="1"/>
</dbReference>
<dbReference type="CDD" id="cd10719">
    <property type="entry name" value="DnaJ_zf"/>
    <property type="match status" value="1"/>
</dbReference>
<dbReference type="FunFam" id="1.10.287.110:FF:000034">
    <property type="entry name" value="Chaperone protein DnaJ"/>
    <property type="match status" value="1"/>
</dbReference>
<dbReference type="FunFam" id="2.10.230.10:FF:000002">
    <property type="entry name" value="Molecular chaperone DnaJ"/>
    <property type="match status" value="1"/>
</dbReference>
<dbReference type="FunFam" id="2.60.260.20:FF:000004">
    <property type="entry name" value="Molecular chaperone DnaJ"/>
    <property type="match status" value="1"/>
</dbReference>
<dbReference type="FunFam" id="2.60.260.20:FF:000009">
    <property type="entry name" value="Putative Mitochondrial DnaJ chaperone"/>
    <property type="match status" value="1"/>
</dbReference>
<dbReference type="Gene3D" id="1.10.287.110">
    <property type="entry name" value="DnaJ domain"/>
    <property type="match status" value="1"/>
</dbReference>
<dbReference type="Gene3D" id="2.10.230.10">
    <property type="entry name" value="Heat shock protein DnaJ, cysteine-rich domain"/>
    <property type="match status" value="1"/>
</dbReference>
<dbReference type="Gene3D" id="2.60.260.20">
    <property type="entry name" value="Urease metallochaperone UreE, N-terminal domain"/>
    <property type="match status" value="2"/>
</dbReference>
<dbReference type="HAMAP" id="MF_01152">
    <property type="entry name" value="DnaJ"/>
    <property type="match status" value="1"/>
</dbReference>
<dbReference type="InterPro" id="IPR012724">
    <property type="entry name" value="DnaJ"/>
</dbReference>
<dbReference type="InterPro" id="IPR002939">
    <property type="entry name" value="DnaJ_C"/>
</dbReference>
<dbReference type="InterPro" id="IPR001623">
    <property type="entry name" value="DnaJ_domain"/>
</dbReference>
<dbReference type="InterPro" id="IPR018253">
    <property type="entry name" value="DnaJ_domain_CS"/>
</dbReference>
<dbReference type="InterPro" id="IPR008971">
    <property type="entry name" value="HSP40/DnaJ_pept-bd"/>
</dbReference>
<dbReference type="InterPro" id="IPR001305">
    <property type="entry name" value="HSP_DnaJ_Cys-rich_dom"/>
</dbReference>
<dbReference type="InterPro" id="IPR036410">
    <property type="entry name" value="HSP_DnaJ_Cys-rich_dom_sf"/>
</dbReference>
<dbReference type="InterPro" id="IPR036869">
    <property type="entry name" value="J_dom_sf"/>
</dbReference>
<dbReference type="NCBIfam" id="TIGR02349">
    <property type="entry name" value="DnaJ_bact"/>
    <property type="match status" value="1"/>
</dbReference>
<dbReference type="NCBIfam" id="NF008035">
    <property type="entry name" value="PRK10767.1"/>
    <property type="match status" value="1"/>
</dbReference>
<dbReference type="PANTHER" id="PTHR43096:SF48">
    <property type="entry name" value="CHAPERONE PROTEIN DNAJ"/>
    <property type="match status" value="1"/>
</dbReference>
<dbReference type="PANTHER" id="PTHR43096">
    <property type="entry name" value="DNAJ HOMOLOG 1, MITOCHONDRIAL-RELATED"/>
    <property type="match status" value="1"/>
</dbReference>
<dbReference type="Pfam" id="PF00226">
    <property type="entry name" value="DnaJ"/>
    <property type="match status" value="1"/>
</dbReference>
<dbReference type="Pfam" id="PF01556">
    <property type="entry name" value="DnaJ_C"/>
    <property type="match status" value="1"/>
</dbReference>
<dbReference type="Pfam" id="PF00684">
    <property type="entry name" value="DnaJ_CXXCXGXG"/>
    <property type="match status" value="1"/>
</dbReference>
<dbReference type="PRINTS" id="PR00625">
    <property type="entry name" value="JDOMAIN"/>
</dbReference>
<dbReference type="SMART" id="SM00271">
    <property type="entry name" value="DnaJ"/>
    <property type="match status" value="1"/>
</dbReference>
<dbReference type="SUPFAM" id="SSF46565">
    <property type="entry name" value="Chaperone J-domain"/>
    <property type="match status" value="1"/>
</dbReference>
<dbReference type="SUPFAM" id="SSF57938">
    <property type="entry name" value="DnaJ/Hsp40 cysteine-rich domain"/>
    <property type="match status" value="1"/>
</dbReference>
<dbReference type="SUPFAM" id="SSF49493">
    <property type="entry name" value="HSP40/DnaJ peptide-binding domain"/>
    <property type="match status" value="2"/>
</dbReference>
<dbReference type="PROSITE" id="PS00636">
    <property type="entry name" value="DNAJ_1"/>
    <property type="match status" value="1"/>
</dbReference>
<dbReference type="PROSITE" id="PS50076">
    <property type="entry name" value="DNAJ_2"/>
    <property type="match status" value="1"/>
</dbReference>
<dbReference type="PROSITE" id="PS51188">
    <property type="entry name" value="ZF_CR"/>
    <property type="match status" value="1"/>
</dbReference>
<proteinExistence type="inferred from homology"/>
<feature type="chain" id="PRO_1000164282" description="Chaperone protein DnaJ">
    <location>
        <begin position="1"/>
        <end position="377"/>
    </location>
</feature>
<feature type="domain" description="J" evidence="1">
    <location>
        <begin position="5"/>
        <end position="70"/>
    </location>
</feature>
<feature type="repeat" description="CXXCXGXG motif">
    <location>
        <begin position="143"/>
        <end position="150"/>
    </location>
</feature>
<feature type="repeat" description="CXXCXGXG motif">
    <location>
        <begin position="160"/>
        <end position="167"/>
    </location>
</feature>
<feature type="repeat" description="CXXCXGXG motif">
    <location>
        <begin position="182"/>
        <end position="189"/>
    </location>
</feature>
<feature type="repeat" description="CXXCXGXG motif">
    <location>
        <begin position="196"/>
        <end position="203"/>
    </location>
</feature>
<feature type="zinc finger region" description="CR-type" evidence="1">
    <location>
        <begin position="130"/>
        <end position="208"/>
    </location>
</feature>
<feature type="binding site" evidence="1">
    <location>
        <position position="143"/>
    </location>
    <ligand>
        <name>Zn(2+)</name>
        <dbReference type="ChEBI" id="CHEBI:29105"/>
        <label>1</label>
    </ligand>
</feature>
<feature type="binding site" evidence="1">
    <location>
        <position position="146"/>
    </location>
    <ligand>
        <name>Zn(2+)</name>
        <dbReference type="ChEBI" id="CHEBI:29105"/>
        <label>1</label>
    </ligand>
</feature>
<feature type="binding site" evidence="1">
    <location>
        <position position="160"/>
    </location>
    <ligand>
        <name>Zn(2+)</name>
        <dbReference type="ChEBI" id="CHEBI:29105"/>
        <label>2</label>
    </ligand>
</feature>
<feature type="binding site" evidence="1">
    <location>
        <position position="163"/>
    </location>
    <ligand>
        <name>Zn(2+)</name>
        <dbReference type="ChEBI" id="CHEBI:29105"/>
        <label>2</label>
    </ligand>
</feature>
<feature type="binding site" evidence="1">
    <location>
        <position position="182"/>
    </location>
    <ligand>
        <name>Zn(2+)</name>
        <dbReference type="ChEBI" id="CHEBI:29105"/>
        <label>2</label>
    </ligand>
</feature>
<feature type="binding site" evidence="1">
    <location>
        <position position="185"/>
    </location>
    <ligand>
        <name>Zn(2+)</name>
        <dbReference type="ChEBI" id="CHEBI:29105"/>
        <label>2</label>
    </ligand>
</feature>
<feature type="binding site" evidence="1">
    <location>
        <position position="196"/>
    </location>
    <ligand>
        <name>Zn(2+)</name>
        <dbReference type="ChEBI" id="CHEBI:29105"/>
        <label>1</label>
    </ligand>
</feature>
<feature type="binding site" evidence="1">
    <location>
        <position position="199"/>
    </location>
    <ligand>
        <name>Zn(2+)</name>
        <dbReference type="ChEBI" id="CHEBI:29105"/>
        <label>1</label>
    </ligand>
</feature>
<accession>B8GNX2</accession>
<reference key="1">
    <citation type="journal article" date="2011" name="Stand. Genomic Sci.">
        <title>Complete genome sequence of 'Thioalkalivibrio sulfidophilus' HL-EbGr7.</title>
        <authorList>
            <person name="Muyzer G."/>
            <person name="Sorokin D.Y."/>
            <person name="Mavromatis K."/>
            <person name="Lapidus A."/>
            <person name="Clum A."/>
            <person name="Ivanova N."/>
            <person name="Pati A."/>
            <person name="d'Haeseleer P."/>
            <person name="Woyke T."/>
            <person name="Kyrpides N.C."/>
        </authorList>
    </citation>
    <scope>NUCLEOTIDE SEQUENCE [LARGE SCALE GENOMIC DNA]</scope>
    <source>
        <strain>HL-EbGR7</strain>
    </source>
</reference>
<evidence type="ECO:0000255" key="1">
    <source>
        <dbReference type="HAMAP-Rule" id="MF_01152"/>
    </source>
</evidence>
<keyword id="KW-0143">Chaperone</keyword>
<keyword id="KW-0963">Cytoplasm</keyword>
<keyword id="KW-0235">DNA replication</keyword>
<keyword id="KW-0479">Metal-binding</keyword>
<keyword id="KW-1185">Reference proteome</keyword>
<keyword id="KW-0677">Repeat</keyword>
<keyword id="KW-0346">Stress response</keyword>
<keyword id="KW-0862">Zinc</keyword>
<keyword id="KW-0863">Zinc-finger</keyword>
<organism>
    <name type="scientific">Thioalkalivibrio sulfidiphilus (strain HL-EbGR7)</name>
    <dbReference type="NCBI Taxonomy" id="396588"/>
    <lineage>
        <taxon>Bacteria</taxon>
        <taxon>Pseudomonadati</taxon>
        <taxon>Pseudomonadota</taxon>
        <taxon>Gammaproteobacteria</taxon>
        <taxon>Chromatiales</taxon>
        <taxon>Ectothiorhodospiraceae</taxon>
        <taxon>Thioalkalivibrio</taxon>
    </lineage>
</organism>
<sequence>MAKRDYYEILGVAKNASEAELKKAFRRLAMKHHPDRNPGDKESEEKFKEAKEAYEILTDPQKRAAYDQFGHAGVDPSAGGGARGGASFSDIFEDIFGDIFGGGRGGGSRVYRGSDLQYNLELTLEEAVFGTEVKIRVPSLVECGECHGSGAEKGTTPETCGTCGGVGQVRMQQGFFSVQQTCPRCHGTGKMITHPCKACHGQGRVEEHKTLSVKVPAGVDSGDRIRLSGEGEAGINGGPPGDLYVQIHVKAHKLFTRKGNDLMCEVPISFATAALGGELEIPTLDGRVNLKIPEETQSGRLFRLRAKGVKSVHGGAQGDLICRVSVETPVNLTKRQKELLKELDETMKAGGTRHSPQEEGWLDGVKGFFEDLKFWNK</sequence>
<name>DNAJ_THISH</name>
<gene>
    <name evidence="1" type="primary">dnaJ</name>
    <name type="ordered locus">Tgr7_0973</name>
</gene>
<protein>
    <recommendedName>
        <fullName evidence="1">Chaperone protein DnaJ</fullName>
    </recommendedName>
</protein>